<reference evidence="9" key="1">
    <citation type="journal article" date="2002" name="Genetics">
        <title>subito encodes a kinesin-like protein required for meiotic spindle pole formation in Drosophila melanogaster.</title>
        <authorList>
            <person name="Giunta K.L."/>
            <person name="Jang J.K."/>
            <person name="Manheim E.A."/>
            <person name="Subramanian G."/>
            <person name="McKim K.S."/>
        </authorList>
    </citation>
    <scope>NUCLEOTIDE SEQUENCE [MRNA]</scope>
    <scope>FUNCTION</scope>
    <scope>SUBCELLULAR LOCATION</scope>
    <scope>DEVELOPMENTAL STAGE</scope>
    <scope>MUTAGENESIS OF CYS-152 AND GLU-385</scope>
    <scope>DISRUPTION PHENOTYPE</scope>
    <source>
        <strain evidence="6">Berkeley</strain>
        <tissue evidence="6">Embryo</tissue>
    </source>
</reference>
<reference evidence="9" key="2">
    <citation type="journal article" date="2000" name="Science">
        <title>The genome sequence of Drosophila melanogaster.</title>
        <authorList>
            <person name="Adams M.D."/>
            <person name="Celniker S.E."/>
            <person name="Holt R.A."/>
            <person name="Evans C.A."/>
            <person name="Gocayne J.D."/>
            <person name="Amanatides P.G."/>
            <person name="Scherer S.E."/>
            <person name="Li P.W."/>
            <person name="Hoskins R.A."/>
            <person name="Galle R.F."/>
            <person name="George R.A."/>
            <person name="Lewis S.E."/>
            <person name="Richards S."/>
            <person name="Ashburner M."/>
            <person name="Henderson S.N."/>
            <person name="Sutton G.G."/>
            <person name="Wortman J.R."/>
            <person name="Yandell M.D."/>
            <person name="Zhang Q."/>
            <person name="Chen L.X."/>
            <person name="Brandon R.C."/>
            <person name="Rogers Y.-H.C."/>
            <person name="Blazej R.G."/>
            <person name="Champe M."/>
            <person name="Pfeiffer B.D."/>
            <person name="Wan K.H."/>
            <person name="Doyle C."/>
            <person name="Baxter E.G."/>
            <person name="Helt G."/>
            <person name="Nelson C.R."/>
            <person name="Miklos G.L.G."/>
            <person name="Abril J.F."/>
            <person name="Agbayani A."/>
            <person name="An H.-J."/>
            <person name="Andrews-Pfannkoch C."/>
            <person name="Baldwin D."/>
            <person name="Ballew R.M."/>
            <person name="Basu A."/>
            <person name="Baxendale J."/>
            <person name="Bayraktaroglu L."/>
            <person name="Beasley E.M."/>
            <person name="Beeson K.Y."/>
            <person name="Benos P.V."/>
            <person name="Berman B.P."/>
            <person name="Bhandari D."/>
            <person name="Bolshakov S."/>
            <person name="Borkova D."/>
            <person name="Botchan M.R."/>
            <person name="Bouck J."/>
            <person name="Brokstein P."/>
            <person name="Brottier P."/>
            <person name="Burtis K.C."/>
            <person name="Busam D.A."/>
            <person name="Butler H."/>
            <person name="Cadieu E."/>
            <person name="Center A."/>
            <person name="Chandra I."/>
            <person name="Cherry J.M."/>
            <person name="Cawley S."/>
            <person name="Dahlke C."/>
            <person name="Davenport L.B."/>
            <person name="Davies P."/>
            <person name="de Pablos B."/>
            <person name="Delcher A."/>
            <person name="Deng Z."/>
            <person name="Mays A.D."/>
            <person name="Dew I."/>
            <person name="Dietz S.M."/>
            <person name="Dodson K."/>
            <person name="Doup L.E."/>
            <person name="Downes M."/>
            <person name="Dugan-Rocha S."/>
            <person name="Dunkov B.C."/>
            <person name="Dunn P."/>
            <person name="Durbin K.J."/>
            <person name="Evangelista C.C."/>
            <person name="Ferraz C."/>
            <person name="Ferriera S."/>
            <person name="Fleischmann W."/>
            <person name="Fosler C."/>
            <person name="Gabrielian A.E."/>
            <person name="Garg N.S."/>
            <person name="Gelbart W.M."/>
            <person name="Glasser K."/>
            <person name="Glodek A."/>
            <person name="Gong F."/>
            <person name="Gorrell J.H."/>
            <person name="Gu Z."/>
            <person name="Guan P."/>
            <person name="Harris M."/>
            <person name="Harris N.L."/>
            <person name="Harvey D.A."/>
            <person name="Heiman T.J."/>
            <person name="Hernandez J.R."/>
            <person name="Houck J."/>
            <person name="Hostin D."/>
            <person name="Houston K.A."/>
            <person name="Howland T.J."/>
            <person name="Wei M.-H."/>
            <person name="Ibegwam C."/>
            <person name="Jalali M."/>
            <person name="Kalush F."/>
            <person name="Karpen G.H."/>
            <person name="Ke Z."/>
            <person name="Kennison J.A."/>
            <person name="Ketchum K.A."/>
            <person name="Kimmel B.E."/>
            <person name="Kodira C.D."/>
            <person name="Kraft C.L."/>
            <person name="Kravitz S."/>
            <person name="Kulp D."/>
            <person name="Lai Z."/>
            <person name="Lasko P."/>
            <person name="Lei Y."/>
            <person name="Levitsky A.A."/>
            <person name="Li J.H."/>
            <person name="Li Z."/>
            <person name="Liang Y."/>
            <person name="Lin X."/>
            <person name="Liu X."/>
            <person name="Mattei B."/>
            <person name="McIntosh T.C."/>
            <person name="McLeod M.P."/>
            <person name="McPherson D."/>
            <person name="Merkulov G."/>
            <person name="Milshina N.V."/>
            <person name="Mobarry C."/>
            <person name="Morris J."/>
            <person name="Moshrefi A."/>
            <person name="Mount S.M."/>
            <person name="Moy M."/>
            <person name="Murphy B."/>
            <person name="Murphy L."/>
            <person name="Muzny D.M."/>
            <person name="Nelson D.L."/>
            <person name="Nelson D.R."/>
            <person name="Nelson K.A."/>
            <person name="Nixon K."/>
            <person name="Nusskern D.R."/>
            <person name="Pacleb J.M."/>
            <person name="Palazzolo M."/>
            <person name="Pittman G.S."/>
            <person name="Pan S."/>
            <person name="Pollard J."/>
            <person name="Puri V."/>
            <person name="Reese M.G."/>
            <person name="Reinert K."/>
            <person name="Remington K."/>
            <person name="Saunders R.D.C."/>
            <person name="Scheeler F."/>
            <person name="Shen H."/>
            <person name="Shue B.C."/>
            <person name="Siden-Kiamos I."/>
            <person name="Simpson M."/>
            <person name="Skupski M.P."/>
            <person name="Smith T.J."/>
            <person name="Spier E."/>
            <person name="Spradling A.C."/>
            <person name="Stapleton M."/>
            <person name="Strong R."/>
            <person name="Sun E."/>
            <person name="Svirskas R."/>
            <person name="Tector C."/>
            <person name="Turner R."/>
            <person name="Venter E."/>
            <person name="Wang A.H."/>
            <person name="Wang X."/>
            <person name="Wang Z.-Y."/>
            <person name="Wassarman D.A."/>
            <person name="Weinstock G.M."/>
            <person name="Weissenbach J."/>
            <person name="Williams S.M."/>
            <person name="Woodage T."/>
            <person name="Worley K.C."/>
            <person name="Wu D."/>
            <person name="Yang S."/>
            <person name="Yao Q.A."/>
            <person name="Ye J."/>
            <person name="Yeh R.-F."/>
            <person name="Zaveri J.S."/>
            <person name="Zhan M."/>
            <person name="Zhang G."/>
            <person name="Zhao Q."/>
            <person name="Zheng L."/>
            <person name="Zheng X.H."/>
            <person name="Zhong F.N."/>
            <person name="Zhong W."/>
            <person name="Zhou X."/>
            <person name="Zhu S.C."/>
            <person name="Zhu X."/>
            <person name="Smith H.O."/>
            <person name="Gibbs R.A."/>
            <person name="Myers E.W."/>
            <person name="Rubin G.M."/>
            <person name="Venter J.C."/>
        </authorList>
    </citation>
    <scope>NUCLEOTIDE SEQUENCE [LARGE SCALE GENOMIC DNA]</scope>
    <source>
        <strain evidence="5">Berkeley</strain>
    </source>
</reference>
<reference key="3">
    <citation type="journal article" date="2002" name="Genome Biol.">
        <title>Annotation of the Drosophila melanogaster euchromatic genome: a systematic review.</title>
        <authorList>
            <person name="Misra S."/>
            <person name="Crosby M.A."/>
            <person name="Mungall C.J."/>
            <person name="Matthews B.B."/>
            <person name="Campbell K.S."/>
            <person name="Hradecky P."/>
            <person name="Huang Y."/>
            <person name="Kaminker J.S."/>
            <person name="Millburn G.H."/>
            <person name="Prochnik S.E."/>
            <person name="Smith C.D."/>
            <person name="Tupy J.L."/>
            <person name="Whitfield E.J."/>
            <person name="Bayraktaroglu L."/>
            <person name="Berman B.P."/>
            <person name="Bettencourt B.R."/>
            <person name="Celniker S.E."/>
            <person name="de Grey A.D.N.J."/>
            <person name="Drysdale R.A."/>
            <person name="Harris N.L."/>
            <person name="Richter J."/>
            <person name="Russo S."/>
            <person name="Schroeder A.J."/>
            <person name="Shu S.Q."/>
            <person name="Stapleton M."/>
            <person name="Yamada C."/>
            <person name="Ashburner M."/>
            <person name="Gelbart W.M."/>
            <person name="Rubin G.M."/>
            <person name="Lewis S.E."/>
        </authorList>
    </citation>
    <scope>GENOME REANNOTATION</scope>
    <source>
        <strain>Berkeley</strain>
    </source>
</reference>
<reference evidence="9" key="4">
    <citation type="journal article" date="2002" name="Genome Biol.">
        <title>A Drosophila full-length cDNA resource.</title>
        <authorList>
            <person name="Stapleton M."/>
            <person name="Carlson J.W."/>
            <person name="Brokstein P."/>
            <person name="Yu C."/>
            <person name="Champe M."/>
            <person name="George R.A."/>
            <person name="Guarin H."/>
            <person name="Kronmiller B."/>
            <person name="Pacleb J.M."/>
            <person name="Park S."/>
            <person name="Wan K.H."/>
            <person name="Rubin G.M."/>
            <person name="Celniker S.E."/>
        </authorList>
    </citation>
    <scope>NUCLEOTIDE SEQUENCE [LARGE SCALE MRNA]</scope>
    <source>
        <strain evidence="7">Berkeley</strain>
        <tissue evidence="7">Embryo</tissue>
    </source>
</reference>
<reference key="5">
    <citation type="journal article" date="2008" name="J. Proteome Res.">
        <title>Phosphoproteome analysis of Drosophila melanogaster embryos.</title>
        <authorList>
            <person name="Zhai B."/>
            <person name="Villen J."/>
            <person name="Beausoleil S.A."/>
            <person name="Mintseris J."/>
            <person name="Gygi S.P."/>
        </authorList>
    </citation>
    <scope>PHOSPHORYLATION [LARGE SCALE ANALYSIS] AT SER-607; THR-609 AND SER-612</scope>
    <scope>IDENTIFICATION BY MASS SPECTROMETRY</scope>
    <source>
        <tissue>Embryo</tissue>
    </source>
</reference>
<comment type="function">
    <text evidence="6">Required during female meiosis for bipolar spindle formation in the absence of the centrosomes and chromosome homolog segregation. Also has roles in male meiosis and mitotic divisions of the early embryo.</text>
</comment>
<comment type="subcellular location">
    <subcellularLocation>
        <location evidence="6">Cytoplasm</location>
    </subcellularLocation>
    <subcellularLocation>
        <location evidence="6">Cytoplasm</location>
        <location evidence="6">Cytoskeleton</location>
    </subcellularLocation>
    <text>Microtubule-associated.</text>
</comment>
<comment type="developmental stage">
    <text evidence="6">Expressed both maternally and zygotically.</text>
</comment>
<comment type="disruption phenotype">
    <text evidence="6">Mutant female meiotic spindles can be unipolar, multipolar or frayed with no defined poles.</text>
</comment>
<comment type="similarity">
    <text evidence="3">Belongs to the TRAFAC class myosin-kinesin ATPase superfamily. Kinesin family.</text>
</comment>
<feature type="chain" id="PRO_0000125427" description="Kinesin-like protein subito">
    <location>
        <begin position="1"/>
        <end position="628"/>
    </location>
</feature>
<feature type="domain" description="Kinesin motor" evidence="3">
    <location>
        <begin position="87"/>
        <end position="479"/>
    </location>
</feature>
<feature type="region of interest" description="Disordered" evidence="4">
    <location>
        <begin position="28"/>
        <end position="68"/>
    </location>
</feature>
<feature type="region of interest" description="Disordered" evidence="4">
    <location>
        <begin position="596"/>
        <end position="628"/>
    </location>
</feature>
<feature type="coiled-coil region" evidence="2">
    <location>
        <begin position="509"/>
        <end position="612"/>
    </location>
</feature>
<feature type="compositionally biased region" description="Acidic residues" evidence="4">
    <location>
        <begin position="44"/>
        <end position="58"/>
    </location>
</feature>
<feature type="binding site" evidence="1 3">
    <location>
        <begin position="169"/>
        <end position="176"/>
    </location>
    <ligand>
        <name>ATP</name>
        <dbReference type="ChEBI" id="CHEBI:30616"/>
    </ligand>
</feature>
<feature type="modified residue" description="Phosphoserine" evidence="8">
    <location>
        <position position="607"/>
    </location>
</feature>
<feature type="modified residue" description="Phosphothreonine" evidence="8">
    <location>
        <position position="609"/>
    </location>
</feature>
<feature type="modified residue" description="Phosphoserine" evidence="8">
    <location>
        <position position="612"/>
    </location>
</feature>
<feature type="mutagenesis site" description="In allele sub-1794; elevated levels of X chromosome non-disjunction." evidence="6">
    <original>C</original>
    <variation>Y</variation>
    <location>
        <position position="152"/>
    </location>
</feature>
<feature type="mutagenesis site" description="In allele sub-Dub; meiotic non-disjunction in males and females." evidence="6">
    <original>E</original>
    <variation>K</variation>
    <location>
        <position position="385"/>
    </location>
</feature>
<proteinExistence type="evidence at protein level"/>
<accession>Q9V877</accession>
<name>SUB_DROME</name>
<protein>
    <recommendedName>
        <fullName>Kinesin-like protein subito</fullName>
    </recommendedName>
    <alternativeName>
        <fullName>Protein double or nothing</fullName>
    </alternativeName>
</protein>
<keyword id="KW-0067">ATP-binding</keyword>
<keyword id="KW-0131">Cell cycle</keyword>
<keyword id="KW-0132">Cell division</keyword>
<keyword id="KW-0175">Coiled coil</keyword>
<keyword id="KW-0963">Cytoplasm</keyword>
<keyword id="KW-0206">Cytoskeleton</keyword>
<keyword id="KW-0469">Meiosis</keyword>
<keyword id="KW-0493">Microtubule</keyword>
<keyword id="KW-0498">Mitosis</keyword>
<keyword id="KW-0505">Motor protein</keyword>
<keyword id="KW-0547">Nucleotide-binding</keyword>
<keyword id="KW-0597">Phosphoprotein</keyword>
<keyword id="KW-1185">Reference proteome</keyword>
<evidence type="ECO:0000250" key="1">
    <source>
        <dbReference type="UniProtKB" id="Q02241"/>
    </source>
</evidence>
<evidence type="ECO:0000255" key="2"/>
<evidence type="ECO:0000255" key="3">
    <source>
        <dbReference type="PROSITE-ProRule" id="PRU00283"/>
    </source>
</evidence>
<evidence type="ECO:0000256" key="4">
    <source>
        <dbReference type="SAM" id="MobiDB-lite"/>
    </source>
</evidence>
<evidence type="ECO:0000269" key="5">
    <source>
    </source>
</evidence>
<evidence type="ECO:0000269" key="6">
    <source>
    </source>
</evidence>
<evidence type="ECO:0000269" key="7">
    <source>
    </source>
</evidence>
<evidence type="ECO:0000269" key="8">
    <source>
    </source>
</evidence>
<evidence type="ECO:0000305" key="9"/>
<evidence type="ECO:0000312" key="10">
    <source>
        <dbReference type="EMBL" id="AAL39742.1"/>
    </source>
</evidence>
<gene>
    <name type="primary">sub</name>
    <name type="synonym">Dub</name>
    <name type="ORF">CG12298</name>
</gene>
<organism evidence="10">
    <name type="scientific">Drosophila melanogaster</name>
    <name type="common">Fruit fly</name>
    <dbReference type="NCBI Taxonomy" id="7227"/>
    <lineage>
        <taxon>Eukaryota</taxon>
        <taxon>Metazoa</taxon>
        <taxon>Ecdysozoa</taxon>
        <taxon>Arthropoda</taxon>
        <taxon>Hexapoda</taxon>
        <taxon>Insecta</taxon>
        <taxon>Pterygota</taxon>
        <taxon>Neoptera</taxon>
        <taxon>Endopterygota</taxon>
        <taxon>Diptera</taxon>
        <taxon>Brachycera</taxon>
        <taxon>Muscomorpha</taxon>
        <taxon>Ephydroidea</taxon>
        <taxon>Drosophilidae</taxon>
        <taxon>Drosophila</taxon>
        <taxon>Sophophora</taxon>
    </lineage>
</organism>
<sequence length="628" mass="71387">MDSKEVSEVPRREVRSFLMARDPSIDRRFRPRPNKKMRLFDNIQESEEESFSEYSDTESEYKYQSSEATEGASCATSAADSSNVETGPQVFLRLRPVKDASKAYIVSEEANVLITSCKVDSTSNNVNRMEKHFGFTSIFDSTVGQRDIYDTCVGPKIMEEECVTIMTYGTSGSGKTYTLLGDDVRAGIIPRALENIFTIYQDTVFRSPKLKLINGSIVFLQDDASLKELQIRKKLLDLCPDISAHHQRLKQVIDGDHMFETKASTDVSVLVWVSFVEIYNELVYDLLAIPPKQDKLGEVPRKNLKIVGNKGHVFIKGLTSVFVTSSEEALRLLRLGQQRSTYASTSVNANSSRSHCVFTVDILKYNRSGITTQSSYKFCDLAGSERVNNTGTSGLRLKEAKNINTSLMVLGRCLDAASTVQKKKNADIIPYRDSKLTMLLQAALLGKEKLAMIVTVTPLDKYYEENLNVLNFASIAKNIIFKEPVIKQHRVSYCGFMEFSKMSTCEGGDYTKELEDENVRLQLEIEQLKYDHVLQMQLLEEKLRRELTATYQEIIQNNKKQYEDECEKKLLIAQRESEFMLSSQRRRYEEQIEDLKDEIEELKNPASDTDISDDPNESKSPIEILDDD</sequence>
<dbReference type="EMBL" id="AE013599">
    <property type="protein sequence ID" value="AAF57799.1"/>
    <property type="molecule type" value="Genomic_DNA"/>
</dbReference>
<dbReference type="EMBL" id="AY069597">
    <property type="protein sequence ID" value="AAL39742.1"/>
    <property type="molecule type" value="mRNA"/>
</dbReference>
<dbReference type="RefSeq" id="NP_001286548.1">
    <property type="nucleotide sequence ID" value="NM_001299619.1"/>
</dbReference>
<dbReference type="RefSeq" id="NP_611260.1">
    <property type="nucleotide sequence ID" value="NM_137416.3"/>
</dbReference>
<dbReference type="SMR" id="Q9V877"/>
<dbReference type="BioGRID" id="69344">
    <property type="interactions" value="17"/>
</dbReference>
<dbReference type="FunCoup" id="Q9V877">
    <property type="interactions" value="28"/>
</dbReference>
<dbReference type="IntAct" id="Q9V877">
    <property type="interactions" value="4"/>
</dbReference>
<dbReference type="STRING" id="7227.FBpp0086041"/>
<dbReference type="iPTMnet" id="Q9V877"/>
<dbReference type="PaxDb" id="7227-FBpp0086041"/>
<dbReference type="DNASU" id="44870"/>
<dbReference type="EnsemblMetazoa" id="FBtr0086881">
    <property type="protein sequence ID" value="FBpp0086041"/>
    <property type="gene ID" value="FBgn0003545"/>
</dbReference>
<dbReference type="EnsemblMetazoa" id="FBtr0340277">
    <property type="protein sequence ID" value="FBpp0309241"/>
    <property type="gene ID" value="FBgn0003545"/>
</dbReference>
<dbReference type="GeneID" id="44870"/>
<dbReference type="KEGG" id="dme:Dmel_CG12298"/>
<dbReference type="AGR" id="FB:FBgn0003545"/>
<dbReference type="CTD" id="44870"/>
<dbReference type="FlyBase" id="FBgn0003545">
    <property type="gene designation" value="sub"/>
</dbReference>
<dbReference type="VEuPathDB" id="VectorBase:FBgn0003545"/>
<dbReference type="eggNOG" id="KOG0247">
    <property type="taxonomic scope" value="Eukaryota"/>
</dbReference>
<dbReference type="GeneTree" id="ENSGT00940000172712"/>
<dbReference type="HOGENOM" id="CLU_027535_0_0_1"/>
<dbReference type="InParanoid" id="Q9V877"/>
<dbReference type="OMA" id="RVFIWIS"/>
<dbReference type="OrthoDB" id="123929at2759"/>
<dbReference type="PhylomeDB" id="Q9V877"/>
<dbReference type="Reactome" id="R-DME-6811434">
    <property type="pathway name" value="COPI-dependent Golgi-to-ER retrograde traffic"/>
</dbReference>
<dbReference type="Reactome" id="R-DME-68884">
    <property type="pathway name" value="Mitotic Telophase/Cytokinesis"/>
</dbReference>
<dbReference type="Reactome" id="R-DME-983189">
    <property type="pathway name" value="Kinesins"/>
</dbReference>
<dbReference type="BioGRID-ORCS" id="44870">
    <property type="hits" value="1 hit in 1 CRISPR screen"/>
</dbReference>
<dbReference type="CD-CODE" id="2838EF58">
    <property type="entry name" value="Centrosome"/>
</dbReference>
<dbReference type="GenomeRNAi" id="44870"/>
<dbReference type="PRO" id="PR:Q9V877"/>
<dbReference type="Proteomes" id="UP000000803">
    <property type="component" value="Chromosome 2R"/>
</dbReference>
<dbReference type="Bgee" id="FBgn0003545">
    <property type="expression patterns" value="Expressed in spermatogonium in testis and 29 other cell types or tissues"/>
</dbReference>
<dbReference type="ExpressionAtlas" id="Q9V877">
    <property type="expression patterns" value="baseline and differential"/>
</dbReference>
<dbReference type="GO" id="GO:0005737">
    <property type="term" value="C:cytoplasm"/>
    <property type="evidence" value="ECO:0000318"/>
    <property type="project" value="GO_Central"/>
</dbReference>
<dbReference type="GO" id="GO:0005871">
    <property type="term" value="C:kinesin complex"/>
    <property type="evidence" value="ECO:0000318"/>
    <property type="project" value="GO_Central"/>
</dbReference>
<dbReference type="GO" id="GO:1990385">
    <property type="term" value="C:meiotic spindle midzone"/>
    <property type="evidence" value="ECO:0000314"/>
    <property type="project" value="FlyBase"/>
</dbReference>
<dbReference type="GO" id="GO:0005874">
    <property type="term" value="C:microtubule"/>
    <property type="evidence" value="ECO:0000318"/>
    <property type="project" value="GO_Central"/>
</dbReference>
<dbReference type="GO" id="GO:0005875">
    <property type="term" value="C:microtubule associated complex"/>
    <property type="evidence" value="ECO:0000314"/>
    <property type="project" value="UniProtKB"/>
</dbReference>
<dbReference type="GO" id="GO:0005634">
    <property type="term" value="C:nucleus"/>
    <property type="evidence" value="ECO:0000314"/>
    <property type="project" value="FlyBase"/>
</dbReference>
<dbReference type="GO" id="GO:0051233">
    <property type="term" value="C:spindle midzone"/>
    <property type="evidence" value="ECO:0000314"/>
    <property type="project" value="FlyBase"/>
</dbReference>
<dbReference type="GO" id="GO:0000922">
    <property type="term" value="C:spindle pole"/>
    <property type="evidence" value="ECO:0000315"/>
    <property type="project" value="UniProtKB"/>
</dbReference>
<dbReference type="GO" id="GO:0005524">
    <property type="term" value="F:ATP binding"/>
    <property type="evidence" value="ECO:0007669"/>
    <property type="project" value="UniProtKB-KW"/>
</dbReference>
<dbReference type="GO" id="GO:0016887">
    <property type="term" value="F:ATP hydrolysis activity"/>
    <property type="evidence" value="ECO:0000318"/>
    <property type="project" value="GO_Central"/>
</dbReference>
<dbReference type="GO" id="GO:0140496">
    <property type="term" value="F:gamma-tubulin complex binding"/>
    <property type="evidence" value="ECO:0000314"/>
    <property type="project" value="FlyBase"/>
</dbReference>
<dbReference type="GO" id="GO:0008017">
    <property type="term" value="F:microtubule binding"/>
    <property type="evidence" value="ECO:0000318"/>
    <property type="project" value="GO_Central"/>
</dbReference>
<dbReference type="GO" id="GO:0003777">
    <property type="term" value="F:microtubule motor activity"/>
    <property type="evidence" value="ECO:0000315"/>
    <property type="project" value="UniProtKB"/>
</dbReference>
<dbReference type="GO" id="GO:0040016">
    <property type="term" value="P:embryonic cleavage"/>
    <property type="evidence" value="ECO:0000315"/>
    <property type="project" value="UniProtKB"/>
</dbReference>
<dbReference type="GO" id="GO:0016321">
    <property type="term" value="P:female meiosis chromosome segregation"/>
    <property type="evidence" value="ECO:0000315"/>
    <property type="project" value="FlyBase"/>
</dbReference>
<dbReference type="GO" id="GO:0033566">
    <property type="term" value="P:gamma-tubulin complex localization"/>
    <property type="evidence" value="ECO:0000314"/>
    <property type="project" value="FlyBase"/>
</dbReference>
<dbReference type="GO" id="GO:0007140">
    <property type="term" value="P:male meiotic nuclear division"/>
    <property type="evidence" value="ECO:0000315"/>
    <property type="project" value="UniProtKB"/>
</dbReference>
<dbReference type="GO" id="GO:0051257">
    <property type="term" value="P:meiotic spindle midzone assembly"/>
    <property type="evidence" value="ECO:0000314"/>
    <property type="project" value="FlyBase"/>
</dbReference>
<dbReference type="GO" id="GO:0000212">
    <property type="term" value="P:meiotic spindle organization"/>
    <property type="evidence" value="ECO:0000315"/>
    <property type="project" value="FlyBase"/>
</dbReference>
<dbReference type="GO" id="GO:0007091">
    <property type="term" value="P:metaphase/anaphase transition of mitotic cell cycle"/>
    <property type="evidence" value="ECO:0000315"/>
    <property type="project" value="FlyBase"/>
</dbReference>
<dbReference type="GO" id="GO:0007020">
    <property type="term" value="P:microtubule nucleation"/>
    <property type="evidence" value="ECO:0000314"/>
    <property type="project" value="FlyBase"/>
</dbReference>
<dbReference type="GO" id="GO:0007018">
    <property type="term" value="P:microtubule-based movement"/>
    <property type="evidence" value="ECO:0000318"/>
    <property type="project" value="GO_Central"/>
</dbReference>
<dbReference type="GO" id="GO:0000278">
    <property type="term" value="P:mitotic cell cycle"/>
    <property type="evidence" value="ECO:0000315"/>
    <property type="project" value="FlyBase"/>
</dbReference>
<dbReference type="GO" id="GO:0007052">
    <property type="term" value="P:mitotic spindle organization"/>
    <property type="evidence" value="ECO:0000315"/>
    <property type="project" value="FlyBase"/>
</dbReference>
<dbReference type="GO" id="GO:0007056">
    <property type="term" value="P:spindle assembly involved in female meiosis"/>
    <property type="evidence" value="ECO:0000316"/>
    <property type="project" value="FlyBase"/>
</dbReference>
<dbReference type="CDD" id="cd00106">
    <property type="entry name" value="KISc"/>
    <property type="match status" value="1"/>
</dbReference>
<dbReference type="Gene3D" id="3.40.850.10">
    <property type="entry name" value="Kinesin motor domain"/>
    <property type="match status" value="1"/>
</dbReference>
<dbReference type="InterPro" id="IPR027640">
    <property type="entry name" value="Kinesin-like_fam"/>
</dbReference>
<dbReference type="InterPro" id="IPR019821">
    <property type="entry name" value="Kinesin_motor_CS"/>
</dbReference>
<dbReference type="InterPro" id="IPR001752">
    <property type="entry name" value="Kinesin_motor_dom"/>
</dbReference>
<dbReference type="InterPro" id="IPR036961">
    <property type="entry name" value="Kinesin_motor_dom_sf"/>
</dbReference>
<dbReference type="InterPro" id="IPR027417">
    <property type="entry name" value="P-loop_NTPase"/>
</dbReference>
<dbReference type="PANTHER" id="PTHR24115:SF1008">
    <property type="entry name" value="KINESIN-LIKE PROTEIN SUBITO"/>
    <property type="match status" value="1"/>
</dbReference>
<dbReference type="PANTHER" id="PTHR24115">
    <property type="entry name" value="KINESIN-RELATED"/>
    <property type="match status" value="1"/>
</dbReference>
<dbReference type="Pfam" id="PF00225">
    <property type="entry name" value="Kinesin"/>
    <property type="match status" value="1"/>
</dbReference>
<dbReference type="PRINTS" id="PR00380">
    <property type="entry name" value="KINESINHEAVY"/>
</dbReference>
<dbReference type="SMART" id="SM00129">
    <property type="entry name" value="KISc"/>
    <property type="match status" value="1"/>
</dbReference>
<dbReference type="SUPFAM" id="SSF52540">
    <property type="entry name" value="P-loop containing nucleoside triphosphate hydrolases"/>
    <property type="match status" value="1"/>
</dbReference>
<dbReference type="PROSITE" id="PS00411">
    <property type="entry name" value="KINESIN_MOTOR_1"/>
    <property type="match status" value="1"/>
</dbReference>
<dbReference type="PROSITE" id="PS50067">
    <property type="entry name" value="KINESIN_MOTOR_2"/>
    <property type="match status" value="1"/>
</dbReference>